<sequence>MVYSYTEKKRIRKDFGKRPQVLDVPYLLSIQLDSFQKFIEQDPEGQYGLEAAFRSVFPIQSYSGNSELQYVSYRLGEPVFDVQECQIRGVTYSAPLRVKLRLVIYEREAPEGTVKDIKEQEVYMGEIPLMTDNGTFVINGTERVIVSQLHRSPGVFFDSDKGKTHSSGKVLYNARIIPYRGSWLDFEFDPKDNLFVRIDRRRKLPATIILRALNYTTEQILDLFFEKVIFEIRDNKLQMELVPERLRGETASFDIEANGKVYVEKGRRITARHIRQLEKDDVKLIEVPVEYIAGKVVAKDYIDESTGELICAANMELSLDLLAKLSQSGHKRIETLFTNDLDHGPYISETLRVDPTNDRLSALVEIYRMMRPGEPPTREAAESLFENLFFSEDRYDLSAVGRMKFNRSLLREEIEGSGILSKDDIIDVMKKLIDIRNGKGEVDDIDHLGNRRIRSVGEMAENQFRVGLVRVERAVKERLSLGDLDTLMPQDMINAKPISAAVKEFFGSSQLSQFMDQNNPLSEITHKRRISALGPGGLTRERAGFEVRDVHPTHYGRVCPIETPEGPNIGLINSLSVYAQTNEYGFLETPYRKVTDGVVTDEIHYLSAIEEGNYVIAQANSNLDEEGHFVEDLVTCRSKGESSLFSRDQVDYMDVSTQQVVSVGASLIPFLEHDDANRALMGANMQRQAVPTLRADKPLVGTGMERAVAVDSGVTAVAKRGGVVQYVDASRIVIKVNEDEMYPGEAGIDIYNLTKYTRSNQNTCINQMPCVSLGEPVERGDVLADGPSTDLGELALGQNMRVAFMPWNGYNFEDSILVSERVVQEDRFTTIHIQELACVSRDTKLGPEEITADIPNVGEAALSKLDESGIVYIGAEVTGGDILVGKVTPKGETQLTPEEKLLRAIFGEKASDVKDSSLRVPNGVSGTVIDVQVFTRDGVEKDKRALEIEEMQLKQAKKDLSEELQILEAGLFSRIRAVLVAGGVEAEKLDKLPRDRWLELGLTDEEKQNQLEQLAEQYDELKHEFEKKLEAKRRKITQGDDLAPGVLKIVKVYLAVKRRIQPGDKMAGRHGNKGVISKINPIEDMPYDENGTPVDIVLNPLGVPSRMNIGQILETHLGMAAKGIGDKINAMLKQQQEVAKLREFIQRAYDLGADVRQKVDLSTFSDEEVMRLAENLRKGMPIATPVFDGAKEAEIKELLKLGDLPTSGQIRLYDGRTGEQFERPVTVGYMYMLKLNHLVDDKMHARSTGSYSLVTQQPLGGKAQFGGQRFGEMEVWALEAYGAAYTLQEMLTVKSDDVNGRTKMYKNIVDGNHQMEPGMPESFNVLLKEIRSLGINIELEDE</sequence>
<comment type="function">
    <text evidence="1">DNA-dependent RNA polymerase catalyzes the transcription of DNA into RNA using the four ribonucleoside triphosphates as substrates.</text>
</comment>
<comment type="catalytic activity">
    <reaction evidence="1">
        <text>RNA(n) + a ribonucleoside 5'-triphosphate = RNA(n+1) + diphosphate</text>
        <dbReference type="Rhea" id="RHEA:21248"/>
        <dbReference type="Rhea" id="RHEA-COMP:14527"/>
        <dbReference type="Rhea" id="RHEA-COMP:17342"/>
        <dbReference type="ChEBI" id="CHEBI:33019"/>
        <dbReference type="ChEBI" id="CHEBI:61557"/>
        <dbReference type="ChEBI" id="CHEBI:140395"/>
        <dbReference type="EC" id="2.7.7.6"/>
    </reaction>
</comment>
<comment type="subunit">
    <text evidence="1">The RNAP catalytic core consists of 2 alpha, 1 beta, 1 beta' and 1 omega subunit. When a sigma factor is associated with the core the holoenzyme is formed, which can initiate transcription.</text>
</comment>
<comment type="similarity">
    <text evidence="1">Belongs to the RNA polymerase beta chain family.</text>
</comment>
<protein>
    <recommendedName>
        <fullName evidence="1">DNA-directed RNA polymerase subunit beta</fullName>
        <shortName evidence="1">RNAP subunit beta</shortName>
        <ecNumber evidence="1">2.7.7.6</ecNumber>
    </recommendedName>
    <alternativeName>
        <fullName evidence="1">RNA polymerase subunit beta</fullName>
    </alternativeName>
    <alternativeName>
        <fullName evidence="1">Transcriptase subunit beta</fullName>
    </alternativeName>
</protein>
<reference key="1">
    <citation type="journal article" date="2008" name="J. Bacteriol.">
        <title>Insights into the environmental resistance gene pool from the genome sequence of the multidrug-resistant environmental isolate Escherichia coli SMS-3-5.</title>
        <authorList>
            <person name="Fricke W.F."/>
            <person name="Wright M.S."/>
            <person name="Lindell A.H."/>
            <person name="Harkins D.M."/>
            <person name="Baker-Austin C."/>
            <person name="Ravel J."/>
            <person name="Stepanauskas R."/>
        </authorList>
    </citation>
    <scope>NUCLEOTIDE SEQUENCE [LARGE SCALE GENOMIC DNA]</scope>
    <source>
        <strain>SMS-3-5 / SECEC</strain>
    </source>
</reference>
<accession>B1LNT9</accession>
<gene>
    <name evidence="1" type="primary">rpoB</name>
    <name type="ordered locus">EcSMS35_4435</name>
</gene>
<organism>
    <name type="scientific">Escherichia coli (strain SMS-3-5 / SECEC)</name>
    <dbReference type="NCBI Taxonomy" id="439855"/>
    <lineage>
        <taxon>Bacteria</taxon>
        <taxon>Pseudomonadati</taxon>
        <taxon>Pseudomonadota</taxon>
        <taxon>Gammaproteobacteria</taxon>
        <taxon>Enterobacterales</taxon>
        <taxon>Enterobacteriaceae</taxon>
        <taxon>Escherichia</taxon>
    </lineage>
</organism>
<dbReference type="EC" id="2.7.7.6" evidence="1"/>
<dbReference type="EMBL" id="CP000970">
    <property type="protein sequence ID" value="ACB16045.1"/>
    <property type="molecule type" value="Genomic_DNA"/>
</dbReference>
<dbReference type="RefSeq" id="WP_000263098.1">
    <property type="nucleotide sequence ID" value="NC_010498.1"/>
</dbReference>
<dbReference type="SMR" id="B1LNT9"/>
<dbReference type="GeneID" id="93777907"/>
<dbReference type="KEGG" id="ecm:EcSMS35_4435"/>
<dbReference type="HOGENOM" id="CLU_000524_4_3_6"/>
<dbReference type="Proteomes" id="UP000007011">
    <property type="component" value="Chromosome"/>
</dbReference>
<dbReference type="GO" id="GO:0000428">
    <property type="term" value="C:DNA-directed RNA polymerase complex"/>
    <property type="evidence" value="ECO:0007669"/>
    <property type="project" value="UniProtKB-KW"/>
</dbReference>
<dbReference type="GO" id="GO:0003677">
    <property type="term" value="F:DNA binding"/>
    <property type="evidence" value="ECO:0007669"/>
    <property type="project" value="UniProtKB-UniRule"/>
</dbReference>
<dbReference type="GO" id="GO:0003899">
    <property type="term" value="F:DNA-directed RNA polymerase activity"/>
    <property type="evidence" value="ECO:0007669"/>
    <property type="project" value="UniProtKB-UniRule"/>
</dbReference>
<dbReference type="GO" id="GO:0032549">
    <property type="term" value="F:ribonucleoside binding"/>
    <property type="evidence" value="ECO:0007669"/>
    <property type="project" value="InterPro"/>
</dbReference>
<dbReference type="GO" id="GO:0006351">
    <property type="term" value="P:DNA-templated transcription"/>
    <property type="evidence" value="ECO:0007669"/>
    <property type="project" value="UniProtKB-UniRule"/>
</dbReference>
<dbReference type="CDD" id="cd00653">
    <property type="entry name" value="RNA_pol_B_RPB2"/>
    <property type="match status" value="1"/>
</dbReference>
<dbReference type="FunFam" id="2.30.150.10:FF:000001">
    <property type="entry name" value="DNA-directed RNA polymerase subunit beta"/>
    <property type="match status" value="1"/>
</dbReference>
<dbReference type="FunFam" id="2.40.270.10:FF:000003">
    <property type="entry name" value="DNA-directed RNA polymerase subunit beta"/>
    <property type="match status" value="1"/>
</dbReference>
<dbReference type="FunFam" id="2.40.270.10:FF:000004">
    <property type="entry name" value="DNA-directed RNA polymerase subunit beta"/>
    <property type="match status" value="1"/>
</dbReference>
<dbReference type="FunFam" id="2.40.50.100:FF:000006">
    <property type="entry name" value="DNA-directed RNA polymerase subunit beta"/>
    <property type="match status" value="1"/>
</dbReference>
<dbReference type="FunFam" id="2.40.50.150:FF:000001">
    <property type="entry name" value="DNA-directed RNA polymerase subunit beta"/>
    <property type="match status" value="1"/>
</dbReference>
<dbReference type="FunFam" id="3.90.1100.10:FF:000002">
    <property type="entry name" value="DNA-directed RNA polymerase subunit beta"/>
    <property type="match status" value="1"/>
</dbReference>
<dbReference type="FunFam" id="3.90.1110.10:FF:000001">
    <property type="entry name" value="DNA-directed RNA polymerase subunit beta"/>
    <property type="match status" value="1"/>
</dbReference>
<dbReference type="FunFam" id="3.90.1110.10:FF:000004">
    <property type="entry name" value="DNA-directed RNA polymerase subunit beta"/>
    <property type="match status" value="1"/>
</dbReference>
<dbReference type="FunFam" id="3.90.1800.10:FF:000001">
    <property type="entry name" value="DNA-directed RNA polymerase subunit beta"/>
    <property type="match status" value="1"/>
</dbReference>
<dbReference type="Gene3D" id="2.40.50.100">
    <property type="match status" value="1"/>
</dbReference>
<dbReference type="Gene3D" id="2.40.50.150">
    <property type="match status" value="1"/>
</dbReference>
<dbReference type="Gene3D" id="3.90.1100.10">
    <property type="match status" value="2"/>
</dbReference>
<dbReference type="Gene3D" id="6.10.140.1670">
    <property type="match status" value="1"/>
</dbReference>
<dbReference type="Gene3D" id="2.30.150.10">
    <property type="entry name" value="DNA-directed RNA polymerase, beta subunit, external 1 domain"/>
    <property type="match status" value="1"/>
</dbReference>
<dbReference type="Gene3D" id="2.40.270.10">
    <property type="entry name" value="DNA-directed RNA polymerase, subunit 2, domain 6"/>
    <property type="match status" value="1"/>
</dbReference>
<dbReference type="Gene3D" id="3.90.1800.10">
    <property type="entry name" value="RNA polymerase alpha subunit dimerisation domain"/>
    <property type="match status" value="1"/>
</dbReference>
<dbReference type="Gene3D" id="3.90.1110.10">
    <property type="entry name" value="RNA polymerase Rpb2, domain 2"/>
    <property type="match status" value="1"/>
</dbReference>
<dbReference type="HAMAP" id="MF_01321">
    <property type="entry name" value="RNApol_bact_RpoB"/>
    <property type="match status" value="1"/>
</dbReference>
<dbReference type="InterPro" id="IPR042107">
    <property type="entry name" value="DNA-dir_RNA_pol_bsu_ext_1_sf"/>
</dbReference>
<dbReference type="InterPro" id="IPR019462">
    <property type="entry name" value="DNA-dir_RNA_pol_bsu_external_1"/>
</dbReference>
<dbReference type="InterPro" id="IPR015712">
    <property type="entry name" value="DNA-dir_RNA_pol_su2"/>
</dbReference>
<dbReference type="InterPro" id="IPR007120">
    <property type="entry name" value="DNA-dir_RNAP_su2_dom"/>
</dbReference>
<dbReference type="InterPro" id="IPR037033">
    <property type="entry name" value="DNA-dir_RNAP_su2_hyb_sf"/>
</dbReference>
<dbReference type="InterPro" id="IPR010243">
    <property type="entry name" value="RNA_pol_bsu_bac"/>
</dbReference>
<dbReference type="InterPro" id="IPR007121">
    <property type="entry name" value="RNA_pol_bsu_CS"/>
</dbReference>
<dbReference type="InterPro" id="IPR007644">
    <property type="entry name" value="RNA_pol_bsu_protrusion"/>
</dbReference>
<dbReference type="InterPro" id="IPR007642">
    <property type="entry name" value="RNA_pol_Rpb2_2"/>
</dbReference>
<dbReference type="InterPro" id="IPR037034">
    <property type="entry name" value="RNA_pol_Rpb2_2_sf"/>
</dbReference>
<dbReference type="InterPro" id="IPR007645">
    <property type="entry name" value="RNA_pol_Rpb2_3"/>
</dbReference>
<dbReference type="InterPro" id="IPR007641">
    <property type="entry name" value="RNA_pol_Rpb2_7"/>
</dbReference>
<dbReference type="InterPro" id="IPR014724">
    <property type="entry name" value="RNA_pol_RPB2_OB-fold"/>
</dbReference>
<dbReference type="NCBIfam" id="NF001616">
    <property type="entry name" value="PRK00405.1"/>
    <property type="match status" value="1"/>
</dbReference>
<dbReference type="NCBIfam" id="TIGR02013">
    <property type="entry name" value="rpoB"/>
    <property type="match status" value="1"/>
</dbReference>
<dbReference type="PANTHER" id="PTHR20856">
    <property type="entry name" value="DNA-DIRECTED RNA POLYMERASE I SUBUNIT 2"/>
    <property type="match status" value="1"/>
</dbReference>
<dbReference type="Pfam" id="PF04563">
    <property type="entry name" value="RNA_pol_Rpb2_1"/>
    <property type="match status" value="1"/>
</dbReference>
<dbReference type="Pfam" id="PF04561">
    <property type="entry name" value="RNA_pol_Rpb2_2"/>
    <property type="match status" value="2"/>
</dbReference>
<dbReference type="Pfam" id="PF04565">
    <property type="entry name" value="RNA_pol_Rpb2_3"/>
    <property type="match status" value="1"/>
</dbReference>
<dbReference type="Pfam" id="PF10385">
    <property type="entry name" value="RNA_pol_Rpb2_45"/>
    <property type="match status" value="1"/>
</dbReference>
<dbReference type="Pfam" id="PF00562">
    <property type="entry name" value="RNA_pol_Rpb2_6"/>
    <property type="match status" value="1"/>
</dbReference>
<dbReference type="Pfam" id="PF04560">
    <property type="entry name" value="RNA_pol_Rpb2_7"/>
    <property type="match status" value="1"/>
</dbReference>
<dbReference type="SUPFAM" id="SSF64484">
    <property type="entry name" value="beta and beta-prime subunits of DNA dependent RNA-polymerase"/>
    <property type="match status" value="1"/>
</dbReference>
<dbReference type="PROSITE" id="PS01166">
    <property type="entry name" value="RNA_POL_BETA"/>
    <property type="match status" value="1"/>
</dbReference>
<proteinExistence type="inferred from homology"/>
<feature type="chain" id="PRO_1000141694" description="DNA-directed RNA polymerase subunit beta">
    <location>
        <begin position="1"/>
        <end position="1342"/>
    </location>
</feature>
<feature type="modified residue" description="N6-acetyllysine" evidence="1">
    <location>
        <position position="1022"/>
    </location>
</feature>
<feature type="modified residue" description="N6-acetyllysine" evidence="1">
    <location>
        <position position="1200"/>
    </location>
</feature>
<evidence type="ECO:0000255" key="1">
    <source>
        <dbReference type="HAMAP-Rule" id="MF_01321"/>
    </source>
</evidence>
<keyword id="KW-0007">Acetylation</keyword>
<keyword id="KW-0240">DNA-directed RNA polymerase</keyword>
<keyword id="KW-0548">Nucleotidyltransferase</keyword>
<keyword id="KW-0804">Transcription</keyword>
<keyword id="KW-0808">Transferase</keyword>
<name>RPOB_ECOSM</name>